<keyword id="KW-0417">Keratinization</keyword>
<keyword id="KW-1185">Reference proteome</keyword>
<comment type="function">
    <text evidence="1">Precursors of the cornified envelope of the stratum corneum.</text>
</comment>
<comment type="similarity">
    <text evidence="2">Belongs to the LCE family.</text>
</comment>
<evidence type="ECO:0000250" key="1">
    <source>
        <dbReference type="UniProtKB" id="Q5TA76"/>
    </source>
</evidence>
<evidence type="ECO:0000305" key="2"/>
<evidence type="ECO:0000312" key="3">
    <source>
        <dbReference type="HGNC" id="HGNC:55921"/>
    </source>
</evidence>
<name>LCE7A_HUMAN</name>
<feature type="chain" id="PRO_0000454733" description="Late cornified envelope protein 7A">
    <location>
        <begin position="1"/>
        <end position="95"/>
    </location>
</feature>
<proteinExistence type="inferred from homology"/>
<sequence>MSYQKHQQKWQLPAKCLPKYPSKWTPQAPASCPAPCPPPAPSCCVSSCCISGFGGHCSLVSLRFPRFYLRQPQHSDCCEHESSRCSTCYSSGDCS</sequence>
<dbReference type="EMBL" id="AL162596">
    <property type="status" value="NOT_ANNOTATED_CDS"/>
    <property type="molecule type" value="Genomic_DNA"/>
</dbReference>
<dbReference type="CCDS" id="CCDS91055.1"/>
<dbReference type="RefSeq" id="NP_001382919.1">
    <property type="nucleotide sequence ID" value="NM_001395990.1"/>
</dbReference>
<dbReference type="Ensembl" id="ENST00000650277.2">
    <property type="protein sequence ID" value="ENSP00000497579.1"/>
    <property type="gene ID" value="ENSG00000285946.2"/>
</dbReference>
<dbReference type="GeneID" id="122526777"/>
<dbReference type="MANE-Select" id="ENST00000650277.2">
    <property type="protein sequence ID" value="ENSP00000497579.1"/>
    <property type="RefSeq nucleotide sequence ID" value="NM_001395990.1"/>
    <property type="RefSeq protein sequence ID" value="NP_001382919.1"/>
</dbReference>
<dbReference type="AGR" id="HGNC:55921"/>
<dbReference type="GeneCards" id="LCE7A"/>
<dbReference type="HGNC" id="HGNC:55921">
    <property type="gene designation" value="LCE7A"/>
</dbReference>
<dbReference type="HPA" id="ENSG00000285946">
    <property type="expression patterns" value="Tissue enriched (skin)"/>
</dbReference>
<dbReference type="GeneTree" id="ENSGT00780000122937"/>
<dbReference type="InParanoid" id="P0DV60"/>
<dbReference type="OMA" id="PRFYLRQ"/>
<dbReference type="OrthoDB" id="9633304at2759"/>
<dbReference type="PRO" id="PR:P0DV60"/>
<dbReference type="Proteomes" id="UP000005640">
    <property type="component" value="Chromosome 1"/>
</dbReference>
<dbReference type="GO" id="GO:0031424">
    <property type="term" value="P:keratinization"/>
    <property type="evidence" value="ECO:0007669"/>
    <property type="project" value="UniProtKB-KW"/>
</dbReference>
<dbReference type="InterPro" id="IPR028205">
    <property type="entry name" value="LCE"/>
</dbReference>
<dbReference type="Pfam" id="PF14672">
    <property type="entry name" value="LCE"/>
    <property type="match status" value="1"/>
</dbReference>
<gene>
    <name evidence="3" type="primary">LCE7A</name>
</gene>
<accession>P0DV60</accession>
<reference key="1">
    <citation type="journal article" date="2006" name="Nature">
        <title>The DNA sequence and biological annotation of human chromosome 1.</title>
        <authorList>
            <person name="Gregory S.G."/>
            <person name="Barlow K.F."/>
            <person name="McLay K.E."/>
            <person name="Kaul R."/>
            <person name="Swarbreck D."/>
            <person name="Dunham A."/>
            <person name="Scott C.E."/>
            <person name="Howe K.L."/>
            <person name="Woodfine K."/>
            <person name="Spencer C.C.A."/>
            <person name="Jones M.C."/>
            <person name="Gillson C."/>
            <person name="Searle S."/>
            <person name="Zhou Y."/>
            <person name="Kokocinski F."/>
            <person name="McDonald L."/>
            <person name="Evans R."/>
            <person name="Phillips K."/>
            <person name="Atkinson A."/>
            <person name="Cooper R."/>
            <person name="Jones C."/>
            <person name="Hall R.E."/>
            <person name="Andrews T.D."/>
            <person name="Lloyd C."/>
            <person name="Ainscough R."/>
            <person name="Almeida J.P."/>
            <person name="Ambrose K.D."/>
            <person name="Anderson F."/>
            <person name="Andrew R.W."/>
            <person name="Ashwell R.I.S."/>
            <person name="Aubin K."/>
            <person name="Babbage A.K."/>
            <person name="Bagguley C.L."/>
            <person name="Bailey J."/>
            <person name="Beasley H."/>
            <person name="Bethel G."/>
            <person name="Bird C.P."/>
            <person name="Bray-Allen S."/>
            <person name="Brown J.Y."/>
            <person name="Brown A.J."/>
            <person name="Buckley D."/>
            <person name="Burton J."/>
            <person name="Bye J."/>
            <person name="Carder C."/>
            <person name="Chapman J.C."/>
            <person name="Clark S.Y."/>
            <person name="Clarke G."/>
            <person name="Clee C."/>
            <person name="Cobley V."/>
            <person name="Collier R.E."/>
            <person name="Corby N."/>
            <person name="Coville G.J."/>
            <person name="Davies J."/>
            <person name="Deadman R."/>
            <person name="Dunn M."/>
            <person name="Earthrowl M."/>
            <person name="Ellington A.G."/>
            <person name="Errington H."/>
            <person name="Frankish A."/>
            <person name="Frankland J."/>
            <person name="French L."/>
            <person name="Garner P."/>
            <person name="Garnett J."/>
            <person name="Gay L."/>
            <person name="Ghori M.R.J."/>
            <person name="Gibson R."/>
            <person name="Gilby L.M."/>
            <person name="Gillett W."/>
            <person name="Glithero R.J."/>
            <person name="Grafham D.V."/>
            <person name="Griffiths C."/>
            <person name="Griffiths-Jones S."/>
            <person name="Grocock R."/>
            <person name="Hammond S."/>
            <person name="Harrison E.S.I."/>
            <person name="Hart E."/>
            <person name="Haugen E."/>
            <person name="Heath P.D."/>
            <person name="Holmes S."/>
            <person name="Holt K."/>
            <person name="Howden P.J."/>
            <person name="Hunt A.R."/>
            <person name="Hunt S.E."/>
            <person name="Hunter G."/>
            <person name="Isherwood J."/>
            <person name="James R."/>
            <person name="Johnson C."/>
            <person name="Johnson D."/>
            <person name="Joy A."/>
            <person name="Kay M."/>
            <person name="Kershaw J.K."/>
            <person name="Kibukawa M."/>
            <person name="Kimberley A.M."/>
            <person name="King A."/>
            <person name="Knights A.J."/>
            <person name="Lad H."/>
            <person name="Laird G."/>
            <person name="Lawlor S."/>
            <person name="Leongamornlert D.A."/>
            <person name="Lloyd D.M."/>
            <person name="Loveland J."/>
            <person name="Lovell J."/>
            <person name="Lush M.J."/>
            <person name="Lyne R."/>
            <person name="Martin S."/>
            <person name="Mashreghi-Mohammadi M."/>
            <person name="Matthews L."/>
            <person name="Matthews N.S.W."/>
            <person name="McLaren S."/>
            <person name="Milne S."/>
            <person name="Mistry S."/>
            <person name="Moore M.J.F."/>
            <person name="Nickerson T."/>
            <person name="O'Dell C.N."/>
            <person name="Oliver K."/>
            <person name="Palmeiri A."/>
            <person name="Palmer S.A."/>
            <person name="Parker A."/>
            <person name="Patel D."/>
            <person name="Pearce A.V."/>
            <person name="Peck A.I."/>
            <person name="Pelan S."/>
            <person name="Phelps K."/>
            <person name="Phillimore B.J."/>
            <person name="Plumb R."/>
            <person name="Rajan J."/>
            <person name="Raymond C."/>
            <person name="Rouse G."/>
            <person name="Saenphimmachak C."/>
            <person name="Sehra H.K."/>
            <person name="Sheridan E."/>
            <person name="Shownkeen R."/>
            <person name="Sims S."/>
            <person name="Skuce C.D."/>
            <person name="Smith M."/>
            <person name="Steward C."/>
            <person name="Subramanian S."/>
            <person name="Sycamore N."/>
            <person name="Tracey A."/>
            <person name="Tromans A."/>
            <person name="Van Helmond Z."/>
            <person name="Wall M."/>
            <person name="Wallis J.M."/>
            <person name="White S."/>
            <person name="Whitehead S.L."/>
            <person name="Wilkinson J.E."/>
            <person name="Willey D.L."/>
            <person name="Williams H."/>
            <person name="Wilming L."/>
            <person name="Wray P.W."/>
            <person name="Wu Z."/>
            <person name="Coulson A."/>
            <person name="Vaudin M."/>
            <person name="Sulston J.E."/>
            <person name="Durbin R.M."/>
            <person name="Hubbard T."/>
            <person name="Wooster R."/>
            <person name="Dunham I."/>
            <person name="Carter N.P."/>
            <person name="McVean G."/>
            <person name="Ross M.T."/>
            <person name="Harrow J."/>
            <person name="Olson M.V."/>
            <person name="Beck S."/>
            <person name="Rogers J."/>
            <person name="Bentley D.R."/>
        </authorList>
    </citation>
    <scope>NUCLEOTIDE SEQUENCE [LARGE SCALE GENOMIC DNA]</scope>
</reference>
<protein>
    <recommendedName>
        <fullName evidence="2">Late cornified envelope protein 7A</fullName>
    </recommendedName>
</protein>
<organism>
    <name type="scientific">Homo sapiens</name>
    <name type="common">Human</name>
    <dbReference type="NCBI Taxonomy" id="9606"/>
    <lineage>
        <taxon>Eukaryota</taxon>
        <taxon>Metazoa</taxon>
        <taxon>Chordata</taxon>
        <taxon>Craniata</taxon>
        <taxon>Vertebrata</taxon>
        <taxon>Euteleostomi</taxon>
        <taxon>Mammalia</taxon>
        <taxon>Eutheria</taxon>
        <taxon>Euarchontoglires</taxon>
        <taxon>Primates</taxon>
        <taxon>Haplorrhini</taxon>
        <taxon>Catarrhini</taxon>
        <taxon>Hominidae</taxon>
        <taxon>Homo</taxon>
    </lineage>
</organism>